<name>DTX33_ARATH</name>
<keyword id="KW-0472">Membrane</keyword>
<keyword id="KW-1185">Reference proteome</keyword>
<keyword id="KW-0812">Transmembrane</keyword>
<keyword id="KW-1133">Transmembrane helix</keyword>
<keyword id="KW-0813">Transport</keyword>
<gene>
    <name evidence="3" type="primary">DTX33</name>
    <name evidence="5" type="ordered locus">At1g47530</name>
    <name evidence="6" type="ORF">F16N3.20</name>
</gene>
<sequence length="484" mass="52423">MGKDKTLPLLDPREPPELTGTKSASKVWAKEFGEESKRLWELAGPAIFTAISQYSLGALTQTFSGRLGELELAAVSVENSVISGLAFGVMLGMGSALETLCGQAYGAGQIRMMGIYMQRSWVILFTTALFLLPVYIWAPPILSFFGEAPHISKAAGKFALWMIPQLFAYAANFPIQKFLQSQRKVLVMAWISGVVLVIHAVFSWLFILYFKWGLVGAAITLNTSWWLIVIGQLLYILITKSDGAWTGFSMLAFRDLYGFVKLSLASALMLCLEFWYLMVLVVVTGLLPNPLIPVDAISICMNIEGWTAMISIGFNAAISVRVSNELGAGNAALAKFSVIVVSITSTLIGIVCMIVVLATKDSFPYLFTSSEAVAAETTRIAVLLGFTVLLNSLQPVLSGVAVGAGWQALVAYVNIACYYIIGLPAGLVLGFTLDLGVQGIWGGMVAGICLQTLILIGIIYFTNWNKEAEQAESRVQRWGGTAQE</sequence>
<reference key="1">
    <citation type="journal article" date="2000" name="Nature">
        <title>Sequence and analysis of chromosome 1 of the plant Arabidopsis thaliana.</title>
        <authorList>
            <person name="Theologis A."/>
            <person name="Ecker J.R."/>
            <person name="Palm C.J."/>
            <person name="Federspiel N.A."/>
            <person name="Kaul S."/>
            <person name="White O."/>
            <person name="Alonso J."/>
            <person name="Altafi H."/>
            <person name="Araujo R."/>
            <person name="Bowman C.L."/>
            <person name="Brooks S.Y."/>
            <person name="Buehler E."/>
            <person name="Chan A."/>
            <person name="Chao Q."/>
            <person name="Chen H."/>
            <person name="Cheuk R.F."/>
            <person name="Chin C.W."/>
            <person name="Chung M.K."/>
            <person name="Conn L."/>
            <person name="Conway A.B."/>
            <person name="Conway A.R."/>
            <person name="Creasy T.H."/>
            <person name="Dewar K."/>
            <person name="Dunn P."/>
            <person name="Etgu P."/>
            <person name="Feldblyum T.V."/>
            <person name="Feng J.-D."/>
            <person name="Fong B."/>
            <person name="Fujii C.Y."/>
            <person name="Gill J.E."/>
            <person name="Goldsmith A.D."/>
            <person name="Haas B."/>
            <person name="Hansen N.F."/>
            <person name="Hughes B."/>
            <person name="Huizar L."/>
            <person name="Hunter J.L."/>
            <person name="Jenkins J."/>
            <person name="Johnson-Hopson C."/>
            <person name="Khan S."/>
            <person name="Khaykin E."/>
            <person name="Kim C.J."/>
            <person name="Koo H.L."/>
            <person name="Kremenetskaia I."/>
            <person name="Kurtz D.B."/>
            <person name="Kwan A."/>
            <person name="Lam B."/>
            <person name="Langin-Hooper S."/>
            <person name="Lee A."/>
            <person name="Lee J.M."/>
            <person name="Lenz C.A."/>
            <person name="Li J.H."/>
            <person name="Li Y.-P."/>
            <person name="Lin X."/>
            <person name="Liu S.X."/>
            <person name="Liu Z.A."/>
            <person name="Luros J.S."/>
            <person name="Maiti R."/>
            <person name="Marziali A."/>
            <person name="Militscher J."/>
            <person name="Miranda M."/>
            <person name="Nguyen M."/>
            <person name="Nierman W.C."/>
            <person name="Osborne B.I."/>
            <person name="Pai G."/>
            <person name="Peterson J."/>
            <person name="Pham P.K."/>
            <person name="Rizzo M."/>
            <person name="Rooney T."/>
            <person name="Rowley D."/>
            <person name="Sakano H."/>
            <person name="Salzberg S.L."/>
            <person name="Schwartz J.R."/>
            <person name="Shinn P."/>
            <person name="Southwick A.M."/>
            <person name="Sun H."/>
            <person name="Tallon L.J."/>
            <person name="Tambunga G."/>
            <person name="Toriumi M.J."/>
            <person name="Town C.D."/>
            <person name="Utterback T."/>
            <person name="Van Aken S."/>
            <person name="Vaysberg M."/>
            <person name="Vysotskaia V.S."/>
            <person name="Walker M."/>
            <person name="Wu D."/>
            <person name="Yu G."/>
            <person name="Fraser C.M."/>
            <person name="Venter J.C."/>
            <person name="Davis R.W."/>
        </authorList>
    </citation>
    <scope>NUCLEOTIDE SEQUENCE [LARGE SCALE GENOMIC DNA]</scope>
    <source>
        <strain>cv. Columbia</strain>
    </source>
</reference>
<reference key="2">
    <citation type="journal article" date="2017" name="Plant J.">
        <title>Araport11: a complete reannotation of the Arabidopsis thaliana reference genome.</title>
        <authorList>
            <person name="Cheng C.Y."/>
            <person name="Krishnakumar V."/>
            <person name="Chan A.P."/>
            <person name="Thibaud-Nissen F."/>
            <person name="Schobel S."/>
            <person name="Town C.D."/>
        </authorList>
    </citation>
    <scope>GENOME REANNOTATION</scope>
    <source>
        <strain>cv. Columbia</strain>
    </source>
</reference>
<reference key="3">
    <citation type="journal article" date="2003" name="Science">
        <title>Empirical analysis of transcriptional activity in the Arabidopsis genome.</title>
        <authorList>
            <person name="Yamada K."/>
            <person name="Lim J."/>
            <person name="Dale J.M."/>
            <person name="Chen H."/>
            <person name="Shinn P."/>
            <person name="Palm C.J."/>
            <person name="Southwick A.M."/>
            <person name="Wu H.C."/>
            <person name="Kim C.J."/>
            <person name="Nguyen M."/>
            <person name="Pham P.K."/>
            <person name="Cheuk R.F."/>
            <person name="Karlin-Newmann G."/>
            <person name="Liu S.X."/>
            <person name="Lam B."/>
            <person name="Sakano H."/>
            <person name="Wu T."/>
            <person name="Yu G."/>
            <person name="Miranda M."/>
            <person name="Quach H.L."/>
            <person name="Tripp M."/>
            <person name="Chang C.H."/>
            <person name="Lee J.M."/>
            <person name="Toriumi M.J."/>
            <person name="Chan M.M."/>
            <person name="Tang C.C."/>
            <person name="Onodera C.S."/>
            <person name="Deng J.M."/>
            <person name="Akiyama K."/>
            <person name="Ansari Y."/>
            <person name="Arakawa T."/>
            <person name="Banh J."/>
            <person name="Banno F."/>
            <person name="Bowser L."/>
            <person name="Brooks S.Y."/>
            <person name="Carninci P."/>
            <person name="Chao Q."/>
            <person name="Choy N."/>
            <person name="Enju A."/>
            <person name="Goldsmith A.D."/>
            <person name="Gurjal M."/>
            <person name="Hansen N.F."/>
            <person name="Hayashizaki Y."/>
            <person name="Johnson-Hopson C."/>
            <person name="Hsuan V.W."/>
            <person name="Iida K."/>
            <person name="Karnes M."/>
            <person name="Khan S."/>
            <person name="Koesema E."/>
            <person name="Ishida J."/>
            <person name="Jiang P.X."/>
            <person name="Jones T."/>
            <person name="Kawai J."/>
            <person name="Kamiya A."/>
            <person name="Meyers C."/>
            <person name="Nakajima M."/>
            <person name="Narusaka M."/>
            <person name="Seki M."/>
            <person name="Sakurai T."/>
            <person name="Satou M."/>
            <person name="Tamse R."/>
            <person name="Vaysberg M."/>
            <person name="Wallender E.K."/>
            <person name="Wong C."/>
            <person name="Yamamura Y."/>
            <person name="Yuan S."/>
            <person name="Shinozaki K."/>
            <person name="Davis R.W."/>
            <person name="Theologis A."/>
            <person name="Ecker J.R."/>
        </authorList>
    </citation>
    <scope>NUCLEOTIDE SEQUENCE [LARGE SCALE MRNA]</scope>
    <source>
        <strain>cv. Columbia</strain>
    </source>
</reference>
<reference key="4">
    <citation type="journal article" date="2002" name="J. Biol. Chem.">
        <title>Functional cloning and characterization of a plant efflux carrier for multidrug and heavy metal detoxification.</title>
        <authorList>
            <person name="Li L."/>
            <person name="He Z."/>
            <person name="Pandey G.K."/>
            <person name="Tsuchiya T."/>
            <person name="Luan S."/>
        </authorList>
    </citation>
    <scope>GENE FAMILY</scope>
    <scope>NOMENCLATURE</scope>
</reference>
<reference key="5">
    <citation type="journal article" date="2003" name="Eur. J. Biochem.">
        <title>The multidrug/oligosaccharidyl-lipid/polysaccharide (MOP) exporter superfamily.</title>
        <authorList>
            <person name="Hvorup R.N."/>
            <person name="Winnen B."/>
            <person name="Chang A.B."/>
            <person name="Jiang Y."/>
            <person name="Zhou X.F."/>
            <person name="Saier M.H. Jr."/>
        </authorList>
    </citation>
    <scope>GENE FAMILY</scope>
</reference>
<organism>
    <name type="scientific">Arabidopsis thaliana</name>
    <name type="common">Mouse-ear cress</name>
    <dbReference type="NCBI Taxonomy" id="3702"/>
    <lineage>
        <taxon>Eukaryota</taxon>
        <taxon>Viridiplantae</taxon>
        <taxon>Streptophyta</taxon>
        <taxon>Embryophyta</taxon>
        <taxon>Tracheophyta</taxon>
        <taxon>Spermatophyta</taxon>
        <taxon>Magnoliopsida</taxon>
        <taxon>eudicotyledons</taxon>
        <taxon>Gunneridae</taxon>
        <taxon>Pentapetalae</taxon>
        <taxon>rosids</taxon>
        <taxon>malvids</taxon>
        <taxon>Brassicales</taxon>
        <taxon>Brassicaceae</taxon>
        <taxon>Camelineae</taxon>
        <taxon>Arabidopsis</taxon>
    </lineage>
</organism>
<proteinExistence type="evidence at transcript level"/>
<comment type="subcellular location">
    <subcellularLocation>
        <location evidence="1">Membrane</location>
        <topology evidence="1">Multi-pass membrane protein</topology>
    </subcellularLocation>
</comment>
<comment type="similarity">
    <text evidence="4">Belongs to the multi antimicrobial extrusion (MATE) (TC 2.A.66.1) family.</text>
</comment>
<protein>
    <recommendedName>
        <fullName evidence="3">Protein DETOXIFICATION 33</fullName>
        <shortName evidence="3">AtDTX33</shortName>
    </recommendedName>
    <alternativeName>
        <fullName evidence="4">Multidrug and toxic compound extrusion protein 33</fullName>
        <shortName evidence="4">MATE protein 33</shortName>
    </alternativeName>
</protein>
<dbReference type="EMBL" id="AC007519">
    <property type="protein sequence ID" value="AAD46034.1"/>
    <property type="molecule type" value="Genomic_DNA"/>
</dbReference>
<dbReference type="EMBL" id="CP002684">
    <property type="protein sequence ID" value="AEE32181.1"/>
    <property type="molecule type" value="Genomic_DNA"/>
</dbReference>
<dbReference type="EMBL" id="AY058871">
    <property type="protein sequence ID" value="AAL24258.1"/>
    <property type="molecule type" value="mRNA"/>
</dbReference>
<dbReference type="EMBL" id="BT003024">
    <property type="protein sequence ID" value="AAO23589.1"/>
    <property type="molecule type" value="mRNA"/>
</dbReference>
<dbReference type="PIR" id="F96515">
    <property type="entry name" value="F96515"/>
</dbReference>
<dbReference type="RefSeq" id="NP_175184.1">
    <property type="nucleotide sequence ID" value="NM_103646.4"/>
</dbReference>
<dbReference type="SMR" id="Q9SX83"/>
<dbReference type="FunCoup" id="Q9SX83">
    <property type="interactions" value="63"/>
</dbReference>
<dbReference type="IntAct" id="Q9SX83">
    <property type="interactions" value="32"/>
</dbReference>
<dbReference type="STRING" id="3702.Q9SX83"/>
<dbReference type="PaxDb" id="3702-AT1G47530.1"/>
<dbReference type="ProteomicsDB" id="221873"/>
<dbReference type="EnsemblPlants" id="AT1G47530.1">
    <property type="protein sequence ID" value="AT1G47530.1"/>
    <property type="gene ID" value="AT1G47530"/>
</dbReference>
<dbReference type="GeneID" id="841162"/>
<dbReference type="Gramene" id="AT1G47530.1">
    <property type="protein sequence ID" value="AT1G47530.1"/>
    <property type="gene ID" value="AT1G47530"/>
</dbReference>
<dbReference type="KEGG" id="ath:AT1G47530"/>
<dbReference type="Araport" id="AT1G47530"/>
<dbReference type="TAIR" id="AT1G47530">
    <property type="gene designation" value="DTX33"/>
</dbReference>
<dbReference type="eggNOG" id="KOG1347">
    <property type="taxonomic scope" value="Eukaryota"/>
</dbReference>
<dbReference type="HOGENOM" id="CLU_012893_1_4_1"/>
<dbReference type="InParanoid" id="Q9SX83"/>
<dbReference type="OMA" id="MCSHAFG"/>
<dbReference type="PhylomeDB" id="Q9SX83"/>
<dbReference type="PRO" id="PR:Q9SX83"/>
<dbReference type="Proteomes" id="UP000006548">
    <property type="component" value="Chromosome 1"/>
</dbReference>
<dbReference type="ExpressionAtlas" id="Q9SX83">
    <property type="expression patterns" value="baseline and differential"/>
</dbReference>
<dbReference type="GO" id="GO:0016020">
    <property type="term" value="C:membrane"/>
    <property type="evidence" value="ECO:0007669"/>
    <property type="project" value="UniProtKB-SubCell"/>
</dbReference>
<dbReference type="GO" id="GO:0005634">
    <property type="term" value="C:nucleus"/>
    <property type="evidence" value="ECO:0007005"/>
    <property type="project" value="TAIR"/>
</dbReference>
<dbReference type="GO" id="GO:0000325">
    <property type="term" value="C:plant-type vacuole"/>
    <property type="evidence" value="ECO:0007005"/>
    <property type="project" value="TAIR"/>
</dbReference>
<dbReference type="GO" id="GO:0015297">
    <property type="term" value="F:antiporter activity"/>
    <property type="evidence" value="ECO:0007669"/>
    <property type="project" value="InterPro"/>
</dbReference>
<dbReference type="GO" id="GO:0042910">
    <property type="term" value="F:xenobiotic transmembrane transporter activity"/>
    <property type="evidence" value="ECO:0007669"/>
    <property type="project" value="InterPro"/>
</dbReference>
<dbReference type="GO" id="GO:1990961">
    <property type="term" value="P:xenobiotic detoxification by transmembrane export across the plasma membrane"/>
    <property type="evidence" value="ECO:0007669"/>
    <property type="project" value="InterPro"/>
</dbReference>
<dbReference type="CDD" id="cd13132">
    <property type="entry name" value="MATE_eukaryotic"/>
    <property type="match status" value="1"/>
</dbReference>
<dbReference type="InterPro" id="IPR045069">
    <property type="entry name" value="MATE_euk"/>
</dbReference>
<dbReference type="InterPro" id="IPR002528">
    <property type="entry name" value="MATE_fam"/>
</dbReference>
<dbReference type="NCBIfam" id="TIGR00797">
    <property type="entry name" value="matE"/>
    <property type="match status" value="1"/>
</dbReference>
<dbReference type="PANTHER" id="PTHR11206">
    <property type="entry name" value="MULTIDRUG RESISTANCE PROTEIN"/>
    <property type="match status" value="1"/>
</dbReference>
<dbReference type="Pfam" id="PF01554">
    <property type="entry name" value="MatE"/>
    <property type="match status" value="2"/>
</dbReference>
<accession>Q9SX83</accession>
<accession>Q93Z03</accession>
<evidence type="ECO:0000255" key="1"/>
<evidence type="ECO:0000256" key="2">
    <source>
        <dbReference type="SAM" id="MobiDB-lite"/>
    </source>
</evidence>
<evidence type="ECO:0000303" key="3">
    <source>
    </source>
</evidence>
<evidence type="ECO:0000305" key="4"/>
<evidence type="ECO:0000312" key="5">
    <source>
        <dbReference type="Araport" id="AT1G47530"/>
    </source>
</evidence>
<evidence type="ECO:0000312" key="6">
    <source>
        <dbReference type="EMBL" id="AAD46034.1"/>
    </source>
</evidence>
<feature type="chain" id="PRO_0000434074" description="Protein DETOXIFICATION 33">
    <location>
        <begin position="1"/>
        <end position="484"/>
    </location>
</feature>
<feature type="transmembrane region" description="Helical" evidence="1">
    <location>
        <begin position="39"/>
        <end position="59"/>
    </location>
</feature>
<feature type="transmembrane region" description="Helical" evidence="1">
    <location>
        <begin position="81"/>
        <end position="101"/>
    </location>
</feature>
<feature type="transmembrane region" description="Helical" evidence="1">
    <location>
        <begin position="122"/>
        <end position="142"/>
    </location>
</feature>
<feature type="transmembrane region" description="Helical" evidence="1">
    <location>
        <begin position="155"/>
        <end position="175"/>
    </location>
</feature>
<feature type="transmembrane region" description="Helical" evidence="1">
    <location>
        <begin position="190"/>
        <end position="210"/>
    </location>
</feature>
<feature type="transmembrane region" description="Helical" evidence="1">
    <location>
        <begin position="218"/>
        <end position="238"/>
    </location>
</feature>
<feature type="transmembrane region" description="Helical" evidence="1">
    <location>
        <begin position="267"/>
        <end position="287"/>
    </location>
</feature>
<feature type="transmembrane region" description="Helical" evidence="1">
    <location>
        <begin position="294"/>
        <end position="314"/>
    </location>
</feature>
<feature type="transmembrane region" description="Helical" evidence="1">
    <location>
        <begin position="338"/>
        <end position="358"/>
    </location>
</feature>
<feature type="transmembrane region" description="Helical" evidence="1">
    <location>
        <begin position="380"/>
        <end position="400"/>
    </location>
</feature>
<feature type="transmembrane region" description="Helical" evidence="1">
    <location>
        <begin position="409"/>
        <end position="429"/>
    </location>
</feature>
<feature type="transmembrane region" description="Helical" evidence="1">
    <location>
        <begin position="439"/>
        <end position="459"/>
    </location>
</feature>
<feature type="region of interest" description="Disordered" evidence="2">
    <location>
        <begin position="1"/>
        <end position="22"/>
    </location>
</feature>
<feature type="compositionally biased region" description="Basic and acidic residues" evidence="2">
    <location>
        <begin position="1"/>
        <end position="16"/>
    </location>
</feature>
<feature type="sequence conflict" description="In Ref. 3; AAL24258/AAO23589." evidence="4" ref="3">
    <original>S</original>
    <variation>G</variation>
    <location>
        <position position="52"/>
    </location>
</feature>